<comment type="function">
    <text evidence="1">In the presence of tetrahydrofolate, catalyzes the oxidative demethylation of sarcosine to yield glycine, 5,10-methylenetetrahydrofolate and hydrogen peroxide (By similarity). In the absence of tetrahydrofolate, catalyzes the oxidative demethylation of sarcosine to yield glycine, formaldehyde and hydrogen peroxide (By similarity).</text>
</comment>
<comment type="catalytic activity">
    <reaction evidence="1">
        <text>sarcosine + (6S)-5,6,7,8-tetrahydrofolate + O2 = (6R)-5,10-methylene-5,6,7,8-tetrahydrofolate + glycine + H2O2</text>
        <dbReference type="Rhea" id="RHEA:70455"/>
        <dbReference type="ChEBI" id="CHEBI:15379"/>
        <dbReference type="ChEBI" id="CHEBI:15636"/>
        <dbReference type="ChEBI" id="CHEBI:16240"/>
        <dbReference type="ChEBI" id="CHEBI:57305"/>
        <dbReference type="ChEBI" id="CHEBI:57433"/>
        <dbReference type="ChEBI" id="CHEBI:57453"/>
        <dbReference type="EC" id="1.5.3.24"/>
    </reaction>
</comment>
<comment type="catalytic activity">
    <reaction evidence="1">
        <text>sarcosine + O2 + H2O = formaldehyde + glycine + H2O2</text>
        <dbReference type="Rhea" id="RHEA:13313"/>
        <dbReference type="ChEBI" id="CHEBI:15377"/>
        <dbReference type="ChEBI" id="CHEBI:15379"/>
        <dbReference type="ChEBI" id="CHEBI:16240"/>
        <dbReference type="ChEBI" id="CHEBI:16842"/>
        <dbReference type="ChEBI" id="CHEBI:57305"/>
        <dbReference type="ChEBI" id="CHEBI:57433"/>
    </reaction>
</comment>
<comment type="cofactor">
    <cofactor evidence="1">
        <name>FAD</name>
        <dbReference type="ChEBI" id="CHEBI:57692"/>
    </cofactor>
    <text evidence="1">Binds 1 FAD per subunit.</text>
</comment>
<comment type="cofactor">
    <cofactor evidence="1">
        <name>FMN</name>
        <dbReference type="ChEBI" id="CHEBI:58210"/>
    </cofactor>
    <text evidence="1">Binds 1 FMN covalently.</text>
</comment>
<comment type="subunit">
    <text evidence="1">Heterotetramer composed of subunits alpha (SoxA), beta (SoxB), gamma (SoxG) and delta (SoxD).</text>
</comment>
<comment type="subcellular location">
    <subcellularLocation>
        <location evidence="1">Cytoplasm</location>
    </subcellularLocation>
</comment>
<comment type="similarity">
    <text evidence="3">Belongs to the SoxB family.</text>
</comment>
<accession>O87388</accession>
<reference key="1">
    <citation type="submission" date="1998-03" db="EMBL/GenBank/DDBJ databases">
        <authorList>
            <person name="Powers E.L."/>
            <person name="Vuyyuru V."/>
            <person name="Kahn M.L."/>
        </authorList>
    </citation>
    <scope>NUCLEOTIDE SEQUENCE [GENOMIC DNA]</scope>
    <source>
        <strain>1021</strain>
    </source>
</reference>
<reference key="2">
    <citation type="journal article" date="2001" name="Proc. Natl. Acad. Sci. U.S.A.">
        <title>Analysis of the chromosome sequence of the legume symbiont Sinorhizobium meliloti strain 1021.</title>
        <authorList>
            <person name="Capela D."/>
            <person name="Barloy-Hubler F."/>
            <person name="Gouzy J."/>
            <person name="Bothe G."/>
            <person name="Ampe F."/>
            <person name="Batut J."/>
            <person name="Boistard P."/>
            <person name="Becker A."/>
            <person name="Boutry M."/>
            <person name="Cadieu E."/>
            <person name="Dreano S."/>
            <person name="Gloux S."/>
            <person name="Godrie T."/>
            <person name="Goffeau A."/>
            <person name="Kahn D."/>
            <person name="Kiss E."/>
            <person name="Lelaure V."/>
            <person name="Masuy D."/>
            <person name="Pohl T."/>
            <person name="Portetelle D."/>
            <person name="Puehler A."/>
            <person name="Purnelle B."/>
            <person name="Ramsperger U."/>
            <person name="Renard C."/>
            <person name="Thebault P."/>
            <person name="Vandenbol M."/>
            <person name="Weidner S."/>
            <person name="Galibert F."/>
        </authorList>
    </citation>
    <scope>NUCLEOTIDE SEQUENCE [LARGE SCALE GENOMIC DNA]</scope>
    <source>
        <strain>1021</strain>
    </source>
</reference>
<reference key="3">
    <citation type="journal article" date="2001" name="Science">
        <title>The composite genome of the legume symbiont Sinorhizobium meliloti.</title>
        <authorList>
            <person name="Galibert F."/>
            <person name="Finan T.M."/>
            <person name="Long S.R."/>
            <person name="Puehler A."/>
            <person name="Abola P."/>
            <person name="Ampe F."/>
            <person name="Barloy-Hubler F."/>
            <person name="Barnett M.J."/>
            <person name="Becker A."/>
            <person name="Boistard P."/>
            <person name="Bothe G."/>
            <person name="Boutry M."/>
            <person name="Bowser L."/>
            <person name="Buhrmester J."/>
            <person name="Cadieu E."/>
            <person name="Capela D."/>
            <person name="Chain P."/>
            <person name="Cowie A."/>
            <person name="Davis R.W."/>
            <person name="Dreano S."/>
            <person name="Federspiel N.A."/>
            <person name="Fisher R.F."/>
            <person name="Gloux S."/>
            <person name="Godrie T."/>
            <person name="Goffeau A."/>
            <person name="Golding B."/>
            <person name="Gouzy J."/>
            <person name="Gurjal M."/>
            <person name="Hernandez-Lucas I."/>
            <person name="Hong A."/>
            <person name="Huizar L."/>
            <person name="Hyman R.W."/>
            <person name="Jones T."/>
            <person name="Kahn D."/>
            <person name="Kahn M.L."/>
            <person name="Kalman S."/>
            <person name="Keating D.H."/>
            <person name="Kiss E."/>
            <person name="Komp C."/>
            <person name="Lelaure V."/>
            <person name="Masuy D."/>
            <person name="Palm C."/>
            <person name="Peck M.C."/>
            <person name="Pohl T.M."/>
            <person name="Portetelle D."/>
            <person name="Purnelle B."/>
            <person name="Ramsperger U."/>
            <person name="Surzycki R."/>
            <person name="Thebault P."/>
            <person name="Vandenbol M."/>
            <person name="Vorhoelter F.J."/>
            <person name="Weidner S."/>
            <person name="Wells D.H."/>
            <person name="Wong K."/>
            <person name="Yeh K.-C."/>
            <person name="Batut J."/>
        </authorList>
    </citation>
    <scope>NUCLEOTIDE SEQUENCE [LARGE SCALE GENOMIC DNA]</scope>
    <source>
        <strain>1021</strain>
    </source>
</reference>
<sequence length="416" mass="45374">MRYSALSILLNGLRGNRNWAPAWRQPDPKPHYDVIIVGGGGHGLATAYYLAKEFGITNVAVLEKNYIGSGNVGRNTTIIRSNYLLPGNNPFYELSMKLWEGLEQDFNFNAMVSQRGVLNLFHSDAQRDAYTRRGNAMRLHGVDAELLYRAAVRKMLPFLDFDNARFPIQGGLLQRRGGTVRHDAVAWGYARGADSRGVDIIQNCEVTGIRRENGRVIGVETSRGFIGCAKLALAAAGNSSQVAEMAGLRLPIESHVLQAFVSEGLKPFIDGVVTFGAGHFYVSQSDKGGLVFGGDIDGYNSYAQRGNLATVEHVAEAGKAMIPALSRVRVLRSWGGIMDMSMDGSPIIDRTPIDNLYLNAGWCYGGFKATPASGFCFAHLLARGAPQKTAAAFRLDRFERGFLIDEKGQGAQPNLH</sequence>
<organism>
    <name type="scientific">Rhizobium meliloti (strain 1021)</name>
    <name type="common">Ensifer meliloti</name>
    <name type="synonym">Sinorhizobium meliloti</name>
    <dbReference type="NCBI Taxonomy" id="266834"/>
    <lineage>
        <taxon>Bacteria</taxon>
        <taxon>Pseudomonadati</taxon>
        <taxon>Pseudomonadota</taxon>
        <taxon>Alphaproteobacteria</taxon>
        <taxon>Hyphomicrobiales</taxon>
        <taxon>Rhizobiaceae</taxon>
        <taxon>Sinorhizobium/Ensifer group</taxon>
        <taxon>Sinorhizobium</taxon>
    </lineage>
</organism>
<protein>
    <recommendedName>
        <fullName evidence="1">Sarcosine oxidase subunit beta</fullName>
        <shortName evidence="1">Sarcosine oxidase subunit B</shortName>
        <ecNumber evidence="1">1.5.3.24</ecNumber>
    </recommendedName>
    <alternativeName>
        <fullName evidence="1">Sarcosine oxidase (5,10-methylenetetrahydrofolate-forming) subunit beta</fullName>
    </alternativeName>
    <alternativeName>
        <fullName evidence="1">Tetrameric sarcosine oxidase subunit beta</fullName>
        <shortName evidence="1">TSOX subunit beta</shortName>
    </alternativeName>
</protein>
<gene>
    <name type="primary">soxB</name>
    <name type="ordered locus">R00085</name>
    <name type="ORF">SMc02608</name>
</gene>
<keyword id="KW-0963">Cytoplasm</keyword>
<keyword id="KW-0274">FAD</keyword>
<keyword id="KW-0285">Flavoprotein</keyword>
<keyword id="KW-0288">FMN</keyword>
<keyword id="KW-0547">Nucleotide-binding</keyword>
<keyword id="KW-0560">Oxidoreductase</keyword>
<keyword id="KW-1185">Reference proteome</keyword>
<feature type="chain" id="PRO_0000072045" description="Sarcosine oxidase subunit beta">
    <location>
        <begin position="1"/>
        <end position="416"/>
    </location>
</feature>
<feature type="binding site" evidence="2">
    <location>
        <position position="41"/>
    </location>
    <ligand>
        <name>FAD</name>
        <dbReference type="ChEBI" id="CHEBI:57692"/>
    </ligand>
</feature>
<feature type="binding site" evidence="2">
    <location>
        <position position="42"/>
    </location>
    <ligand>
        <name>FAD</name>
        <dbReference type="ChEBI" id="CHEBI:57692"/>
    </ligand>
</feature>
<feature type="binding site" evidence="2">
    <location>
        <position position="63"/>
    </location>
    <ligand>
        <name>FAD</name>
        <dbReference type="ChEBI" id="CHEBI:57692"/>
    </ligand>
</feature>
<feature type="binding site" evidence="2">
    <location>
        <position position="71"/>
    </location>
    <ligand>
        <name>FAD</name>
        <dbReference type="ChEBI" id="CHEBI:57692"/>
    </ligand>
</feature>
<feature type="binding site" evidence="2">
    <location>
        <position position="76"/>
    </location>
    <ligand>
        <name>FAD</name>
        <dbReference type="ChEBI" id="CHEBI:57692"/>
    </ligand>
</feature>
<feature type="binding site" evidence="2">
    <location>
        <position position="78"/>
    </location>
    <ligand>
        <name>FAD</name>
        <dbReference type="ChEBI" id="CHEBI:57692"/>
    </ligand>
</feature>
<feature type="binding site" evidence="2">
    <location>
        <position position="206"/>
    </location>
    <ligand>
        <name>FAD</name>
        <dbReference type="ChEBI" id="CHEBI:57692"/>
    </ligand>
</feature>
<feature type="binding site" evidence="2">
    <location>
        <position position="366"/>
    </location>
    <ligand>
        <name>FAD</name>
        <dbReference type="ChEBI" id="CHEBI:57692"/>
    </ligand>
</feature>
<feature type="binding site" evidence="2">
    <location>
        <position position="368"/>
    </location>
    <ligand>
        <name>FAD</name>
        <dbReference type="ChEBI" id="CHEBI:57692"/>
    </ligand>
</feature>
<feature type="modified residue" description="Tele-8alpha-FMN histidine" evidence="2">
    <location>
        <position position="182"/>
    </location>
</feature>
<proteinExistence type="inferred from homology"/>
<dbReference type="EC" id="1.5.3.24" evidence="1"/>
<dbReference type="EMBL" id="AF055582">
    <property type="protein sequence ID" value="AAC62218.1"/>
    <property type="molecule type" value="Genomic_DNA"/>
</dbReference>
<dbReference type="EMBL" id="AL591688">
    <property type="protein sequence ID" value="CAC41472.1"/>
    <property type="molecule type" value="Genomic_DNA"/>
</dbReference>
<dbReference type="RefSeq" id="NP_384191.1">
    <property type="nucleotide sequence ID" value="NC_003047.1"/>
</dbReference>
<dbReference type="RefSeq" id="WP_003536326.1">
    <property type="nucleotide sequence ID" value="NC_003047.1"/>
</dbReference>
<dbReference type="SMR" id="O87388"/>
<dbReference type="EnsemblBacteria" id="CAC41472">
    <property type="protein sequence ID" value="CAC41472"/>
    <property type="gene ID" value="SMc02608"/>
</dbReference>
<dbReference type="KEGG" id="sme:SMc02608"/>
<dbReference type="PATRIC" id="fig|266834.11.peg.1442"/>
<dbReference type="eggNOG" id="COG0665">
    <property type="taxonomic scope" value="Bacteria"/>
</dbReference>
<dbReference type="HOGENOM" id="CLU_007884_4_1_5"/>
<dbReference type="OrthoDB" id="9815989at2"/>
<dbReference type="Proteomes" id="UP000001976">
    <property type="component" value="Chromosome"/>
</dbReference>
<dbReference type="GO" id="GO:0005737">
    <property type="term" value="C:cytoplasm"/>
    <property type="evidence" value="ECO:0007669"/>
    <property type="project" value="UniProtKB-SubCell"/>
</dbReference>
<dbReference type="GO" id="GO:0000166">
    <property type="term" value="F:nucleotide binding"/>
    <property type="evidence" value="ECO:0007669"/>
    <property type="project" value="UniProtKB-KW"/>
</dbReference>
<dbReference type="GO" id="GO:0008115">
    <property type="term" value="F:sarcosine oxidase activity"/>
    <property type="evidence" value="ECO:0007669"/>
    <property type="project" value="UniProtKB-EC"/>
</dbReference>
<dbReference type="GO" id="GO:0046653">
    <property type="term" value="P:tetrahydrofolate metabolic process"/>
    <property type="evidence" value="ECO:0007669"/>
    <property type="project" value="InterPro"/>
</dbReference>
<dbReference type="Gene3D" id="3.30.9.10">
    <property type="entry name" value="D-Amino Acid Oxidase, subunit A, domain 2"/>
    <property type="match status" value="1"/>
</dbReference>
<dbReference type="Gene3D" id="3.50.50.60">
    <property type="entry name" value="FAD/NAD(P)-binding domain"/>
    <property type="match status" value="1"/>
</dbReference>
<dbReference type="InterPro" id="IPR006076">
    <property type="entry name" value="FAD-dep_OxRdtase"/>
</dbReference>
<dbReference type="InterPro" id="IPR036188">
    <property type="entry name" value="FAD/NAD-bd_sf"/>
</dbReference>
<dbReference type="InterPro" id="IPR001763">
    <property type="entry name" value="Rhodanese-like_dom"/>
</dbReference>
<dbReference type="InterPro" id="IPR006278">
    <property type="entry name" value="SoxB"/>
</dbReference>
<dbReference type="NCBIfam" id="TIGR01373">
    <property type="entry name" value="soxB"/>
    <property type="match status" value="1"/>
</dbReference>
<dbReference type="PANTHER" id="PTHR13847:SF287">
    <property type="entry name" value="FAD-DEPENDENT OXIDOREDUCTASE DOMAIN-CONTAINING PROTEIN 1"/>
    <property type="match status" value="1"/>
</dbReference>
<dbReference type="PANTHER" id="PTHR13847">
    <property type="entry name" value="SARCOSINE DEHYDROGENASE-RELATED"/>
    <property type="match status" value="1"/>
</dbReference>
<dbReference type="Pfam" id="PF01266">
    <property type="entry name" value="DAO"/>
    <property type="match status" value="1"/>
</dbReference>
<dbReference type="SUPFAM" id="SSF54373">
    <property type="entry name" value="FAD-linked reductases, C-terminal domain"/>
    <property type="match status" value="1"/>
</dbReference>
<dbReference type="SUPFAM" id="SSF51905">
    <property type="entry name" value="FAD/NAD(P)-binding domain"/>
    <property type="match status" value="1"/>
</dbReference>
<name>TSOXB_RHIME</name>
<evidence type="ECO:0000250" key="1">
    <source>
        <dbReference type="UniProtKB" id="P40875"/>
    </source>
</evidence>
<evidence type="ECO:0000250" key="2">
    <source>
        <dbReference type="UniProtKB" id="Q50LF2"/>
    </source>
</evidence>
<evidence type="ECO:0000305" key="3"/>